<proteinExistence type="inferred from homology"/>
<protein>
    <recommendedName>
        <fullName evidence="2">Elongation factor Tu 2</fullName>
        <shortName evidence="2">EF-Tu 2</shortName>
        <ecNumber evidence="2">3.6.5.3</ecNumber>
    </recommendedName>
</protein>
<reference key="1">
    <citation type="submission" date="2006-08" db="EMBL/GenBank/DDBJ databases">
        <title>Complete sequence of Shewanella frigidimarina NCIMB 400.</title>
        <authorList>
            <consortium name="US DOE Joint Genome Institute"/>
            <person name="Copeland A."/>
            <person name="Lucas S."/>
            <person name="Lapidus A."/>
            <person name="Barry K."/>
            <person name="Detter J.C."/>
            <person name="Glavina del Rio T."/>
            <person name="Hammon N."/>
            <person name="Israni S."/>
            <person name="Dalin E."/>
            <person name="Tice H."/>
            <person name="Pitluck S."/>
            <person name="Fredrickson J.K."/>
            <person name="Kolker E."/>
            <person name="McCuel L.A."/>
            <person name="DiChristina T."/>
            <person name="Nealson K.H."/>
            <person name="Newman D."/>
            <person name="Tiedje J.M."/>
            <person name="Zhou J."/>
            <person name="Romine M.F."/>
            <person name="Culley D.E."/>
            <person name="Serres M."/>
            <person name="Chertkov O."/>
            <person name="Brettin T."/>
            <person name="Bruce D."/>
            <person name="Han C."/>
            <person name="Tapia R."/>
            <person name="Gilna P."/>
            <person name="Schmutz J."/>
            <person name="Larimer F."/>
            <person name="Land M."/>
            <person name="Hauser L."/>
            <person name="Kyrpides N."/>
            <person name="Mikhailova N."/>
            <person name="Richardson P."/>
        </authorList>
    </citation>
    <scope>NUCLEOTIDE SEQUENCE [LARGE SCALE GENOMIC DNA]</scope>
    <source>
        <strain>NCIMB 400</strain>
    </source>
</reference>
<name>EFTU2_SHEFN</name>
<keyword id="KW-0963">Cytoplasm</keyword>
<keyword id="KW-0251">Elongation factor</keyword>
<keyword id="KW-0342">GTP-binding</keyword>
<keyword id="KW-0378">Hydrolase</keyword>
<keyword id="KW-0460">Magnesium</keyword>
<keyword id="KW-0479">Metal-binding</keyword>
<keyword id="KW-0547">Nucleotide-binding</keyword>
<keyword id="KW-0648">Protein biosynthesis</keyword>
<keyword id="KW-1185">Reference proteome</keyword>
<sequence>MAKAKFERIKPHVNVGTIGHVDHGKTTLTAAISAVLSKTYGGEVKNFAQIDNAPEERERGITINTSHIEYDTPIRHYAHVDCPGHADYVKNMITGAAQMDGAILVVAATDGPMPQTREHILLSRQVGVPFIIVFMNKCDMVDDEELLELVEMEVRELLSEYDFPGDDLPVIQGSALKALEGQPEWEAKILELAEALDTYIPEPARDIDKPFLLPIEDVFSISGRGTVVTGRVERGIVRVSDEVEIVGVRPTTKTTCTGVEMFRKLLDEGRAGENCGVLLRGTKRDDVERGQVLAKPGSINPHTTFESEVYVLSKEEGGRHTPFFKGYRPQFFFRTTDVTGTIELPEGVEMVMPGDNIKMVVTLIYPIAMDDGLRFAIREGGRTVGAGVVAKIIA</sequence>
<feature type="chain" id="PRO_0000337525" description="Elongation factor Tu 2">
    <location>
        <begin position="1"/>
        <end position="394"/>
    </location>
</feature>
<feature type="domain" description="tr-type G">
    <location>
        <begin position="10"/>
        <end position="204"/>
    </location>
</feature>
<feature type="region of interest" description="G1" evidence="1">
    <location>
        <begin position="19"/>
        <end position="26"/>
    </location>
</feature>
<feature type="region of interest" description="G2" evidence="1">
    <location>
        <begin position="60"/>
        <end position="64"/>
    </location>
</feature>
<feature type="region of interest" description="G3" evidence="1">
    <location>
        <begin position="81"/>
        <end position="84"/>
    </location>
</feature>
<feature type="region of interest" description="G4" evidence="1">
    <location>
        <begin position="136"/>
        <end position="139"/>
    </location>
</feature>
<feature type="region of interest" description="G5" evidence="1">
    <location>
        <begin position="174"/>
        <end position="176"/>
    </location>
</feature>
<feature type="binding site" evidence="2">
    <location>
        <begin position="19"/>
        <end position="26"/>
    </location>
    <ligand>
        <name>GTP</name>
        <dbReference type="ChEBI" id="CHEBI:37565"/>
    </ligand>
</feature>
<feature type="binding site" evidence="2">
    <location>
        <position position="26"/>
    </location>
    <ligand>
        <name>Mg(2+)</name>
        <dbReference type="ChEBI" id="CHEBI:18420"/>
    </ligand>
</feature>
<feature type="binding site" evidence="2">
    <location>
        <begin position="81"/>
        <end position="85"/>
    </location>
    <ligand>
        <name>GTP</name>
        <dbReference type="ChEBI" id="CHEBI:37565"/>
    </ligand>
</feature>
<feature type="binding site" evidence="2">
    <location>
        <begin position="136"/>
        <end position="139"/>
    </location>
    <ligand>
        <name>GTP</name>
        <dbReference type="ChEBI" id="CHEBI:37565"/>
    </ligand>
</feature>
<evidence type="ECO:0000250" key="1"/>
<evidence type="ECO:0000255" key="2">
    <source>
        <dbReference type="HAMAP-Rule" id="MF_00118"/>
    </source>
</evidence>
<dbReference type="EC" id="3.6.5.3" evidence="2"/>
<dbReference type="EMBL" id="CP000447">
    <property type="protein sequence ID" value="ABI70009.1"/>
    <property type="molecule type" value="Genomic_DNA"/>
</dbReference>
<dbReference type="SMR" id="Q089Q6"/>
<dbReference type="STRING" id="318167.Sfri_0146"/>
<dbReference type="KEGG" id="sfr:Sfri_0146"/>
<dbReference type="eggNOG" id="COG0050">
    <property type="taxonomic scope" value="Bacteria"/>
</dbReference>
<dbReference type="HOGENOM" id="CLU_007265_0_2_6"/>
<dbReference type="OrthoDB" id="9803139at2"/>
<dbReference type="Proteomes" id="UP000000684">
    <property type="component" value="Chromosome"/>
</dbReference>
<dbReference type="GO" id="GO:0005829">
    <property type="term" value="C:cytosol"/>
    <property type="evidence" value="ECO:0007669"/>
    <property type="project" value="TreeGrafter"/>
</dbReference>
<dbReference type="GO" id="GO:0005525">
    <property type="term" value="F:GTP binding"/>
    <property type="evidence" value="ECO:0007669"/>
    <property type="project" value="UniProtKB-UniRule"/>
</dbReference>
<dbReference type="GO" id="GO:0003924">
    <property type="term" value="F:GTPase activity"/>
    <property type="evidence" value="ECO:0007669"/>
    <property type="project" value="InterPro"/>
</dbReference>
<dbReference type="GO" id="GO:0097216">
    <property type="term" value="F:guanosine tetraphosphate binding"/>
    <property type="evidence" value="ECO:0007669"/>
    <property type="project" value="UniProtKB-ARBA"/>
</dbReference>
<dbReference type="GO" id="GO:0003746">
    <property type="term" value="F:translation elongation factor activity"/>
    <property type="evidence" value="ECO:0007669"/>
    <property type="project" value="UniProtKB-UniRule"/>
</dbReference>
<dbReference type="CDD" id="cd01884">
    <property type="entry name" value="EF_Tu"/>
    <property type="match status" value="1"/>
</dbReference>
<dbReference type="CDD" id="cd03697">
    <property type="entry name" value="EFTU_II"/>
    <property type="match status" value="1"/>
</dbReference>
<dbReference type="CDD" id="cd03707">
    <property type="entry name" value="EFTU_III"/>
    <property type="match status" value="1"/>
</dbReference>
<dbReference type="FunFam" id="2.40.30.10:FF:000001">
    <property type="entry name" value="Elongation factor Tu"/>
    <property type="match status" value="1"/>
</dbReference>
<dbReference type="FunFam" id="3.40.50.300:FF:000003">
    <property type="entry name" value="Elongation factor Tu"/>
    <property type="match status" value="1"/>
</dbReference>
<dbReference type="Gene3D" id="3.40.50.300">
    <property type="entry name" value="P-loop containing nucleotide triphosphate hydrolases"/>
    <property type="match status" value="1"/>
</dbReference>
<dbReference type="Gene3D" id="2.40.30.10">
    <property type="entry name" value="Translation factors"/>
    <property type="match status" value="2"/>
</dbReference>
<dbReference type="HAMAP" id="MF_00118_B">
    <property type="entry name" value="EF_Tu_B"/>
    <property type="match status" value="1"/>
</dbReference>
<dbReference type="InterPro" id="IPR041709">
    <property type="entry name" value="EF-Tu_GTP-bd"/>
</dbReference>
<dbReference type="InterPro" id="IPR050055">
    <property type="entry name" value="EF-Tu_GTPase"/>
</dbReference>
<dbReference type="InterPro" id="IPR004161">
    <property type="entry name" value="EFTu-like_2"/>
</dbReference>
<dbReference type="InterPro" id="IPR033720">
    <property type="entry name" value="EFTU_2"/>
</dbReference>
<dbReference type="InterPro" id="IPR031157">
    <property type="entry name" value="G_TR_CS"/>
</dbReference>
<dbReference type="InterPro" id="IPR027417">
    <property type="entry name" value="P-loop_NTPase"/>
</dbReference>
<dbReference type="InterPro" id="IPR005225">
    <property type="entry name" value="Small_GTP-bd"/>
</dbReference>
<dbReference type="InterPro" id="IPR000795">
    <property type="entry name" value="T_Tr_GTP-bd_dom"/>
</dbReference>
<dbReference type="InterPro" id="IPR009000">
    <property type="entry name" value="Transl_B-barrel_sf"/>
</dbReference>
<dbReference type="InterPro" id="IPR009001">
    <property type="entry name" value="Transl_elong_EF1A/Init_IF2_C"/>
</dbReference>
<dbReference type="InterPro" id="IPR004541">
    <property type="entry name" value="Transl_elong_EFTu/EF1A_bac/org"/>
</dbReference>
<dbReference type="InterPro" id="IPR004160">
    <property type="entry name" value="Transl_elong_EFTu/EF1A_C"/>
</dbReference>
<dbReference type="NCBIfam" id="TIGR00485">
    <property type="entry name" value="EF-Tu"/>
    <property type="match status" value="1"/>
</dbReference>
<dbReference type="NCBIfam" id="NF000766">
    <property type="entry name" value="PRK00049.1"/>
    <property type="match status" value="1"/>
</dbReference>
<dbReference type="NCBIfam" id="NF009372">
    <property type="entry name" value="PRK12735.1"/>
    <property type="match status" value="1"/>
</dbReference>
<dbReference type="NCBIfam" id="NF009373">
    <property type="entry name" value="PRK12736.1"/>
    <property type="match status" value="1"/>
</dbReference>
<dbReference type="NCBIfam" id="TIGR00231">
    <property type="entry name" value="small_GTP"/>
    <property type="match status" value="1"/>
</dbReference>
<dbReference type="PANTHER" id="PTHR43721:SF22">
    <property type="entry name" value="ELONGATION FACTOR TU, MITOCHONDRIAL"/>
    <property type="match status" value="1"/>
</dbReference>
<dbReference type="PANTHER" id="PTHR43721">
    <property type="entry name" value="ELONGATION FACTOR TU-RELATED"/>
    <property type="match status" value="1"/>
</dbReference>
<dbReference type="Pfam" id="PF00009">
    <property type="entry name" value="GTP_EFTU"/>
    <property type="match status" value="1"/>
</dbReference>
<dbReference type="Pfam" id="PF03144">
    <property type="entry name" value="GTP_EFTU_D2"/>
    <property type="match status" value="1"/>
</dbReference>
<dbReference type="Pfam" id="PF03143">
    <property type="entry name" value="GTP_EFTU_D3"/>
    <property type="match status" value="1"/>
</dbReference>
<dbReference type="PRINTS" id="PR00315">
    <property type="entry name" value="ELONGATNFCT"/>
</dbReference>
<dbReference type="SUPFAM" id="SSF50465">
    <property type="entry name" value="EF-Tu/eEF-1alpha/eIF2-gamma C-terminal domain"/>
    <property type="match status" value="1"/>
</dbReference>
<dbReference type="SUPFAM" id="SSF52540">
    <property type="entry name" value="P-loop containing nucleoside triphosphate hydrolases"/>
    <property type="match status" value="1"/>
</dbReference>
<dbReference type="SUPFAM" id="SSF50447">
    <property type="entry name" value="Translation proteins"/>
    <property type="match status" value="1"/>
</dbReference>
<dbReference type="PROSITE" id="PS00301">
    <property type="entry name" value="G_TR_1"/>
    <property type="match status" value="1"/>
</dbReference>
<dbReference type="PROSITE" id="PS51722">
    <property type="entry name" value="G_TR_2"/>
    <property type="match status" value="1"/>
</dbReference>
<gene>
    <name evidence="2" type="primary">tuf2</name>
    <name type="ordered locus">Sfri_0146</name>
</gene>
<accession>Q089Q6</accession>
<organism>
    <name type="scientific">Shewanella frigidimarina (strain NCIMB 400)</name>
    <dbReference type="NCBI Taxonomy" id="318167"/>
    <lineage>
        <taxon>Bacteria</taxon>
        <taxon>Pseudomonadati</taxon>
        <taxon>Pseudomonadota</taxon>
        <taxon>Gammaproteobacteria</taxon>
        <taxon>Alteromonadales</taxon>
        <taxon>Shewanellaceae</taxon>
        <taxon>Shewanella</taxon>
    </lineage>
</organism>
<comment type="function">
    <text evidence="2">GTP hydrolase that promotes the GTP-dependent binding of aminoacyl-tRNA to the A-site of ribosomes during protein biosynthesis.</text>
</comment>
<comment type="catalytic activity">
    <reaction evidence="2">
        <text>GTP + H2O = GDP + phosphate + H(+)</text>
        <dbReference type="Rhea" id="RHEA:19669"/>
        <dbReference type="ChEBI" id="CHEBI:15377"/>
        <dbReference type="ChEBI" id="CHEBI:15378"/>
        <dbReference type="ChEBI" id="CHEBI:37565"/>
        <dbReference type="ChEBI" id="CHEBI:43474"/>
        <dbReference type="ChEBI" id="CHEBI:58189"/>
        <dbReference type="EC" id="3.6.5.3"/>
    </reaction>
    <physiologicalReaction direction="left-to-right" evidence="2">
        <dbReference type="Rhea" id="RHEA:19670"/>
    </physiologicalReaction>
</comment>
<comment type="subunit">
    <text evidence="2">Monomer.</text>
</comment>
<comment type="subcellular location">
    <subcellularLocation>
        <location evidence="2">Cytoplasm</location>
    </subcellularLocation>
</comment>
<comment type="similarity">
    <text evidence="2">Belongs to the TRAFAC class translation factor GTPase superfamily. Classic translation factor GTPase family. EF-Tu/EF-1A subfamily.</text>
</comment>